<sequence length="408" mass="45489">MSVMDAIVVSKPPAHTSASLEKPSLIGLSREEMGAALRERGVAEKQIKMRVAQLWNWIYVRGVSDFDHMTNVAKDMREMLKQHFTIARPEIVEEQVSNDGTRKWLLRFPPRGAGRPVEIEAVYIPEEGRGTLCISSQVGCTLTCSFCHTGTQRLVRNLTAEEILSQLLLARDRLGDFPDREAPQGTIMPAEGRKVSNIVMMGMGEPLYNFDAVKQALLIATDGDGLSLSRRRVTLSTSGVVPEIFRTGEEIGVMLAISLHAVRDDLRDILVPINKKYPLKELIEACKAYPGLSNARRITFEYVMLKDVNDSLEDAKGLIKLLKGVPAKINLIPFNPWPGTNYQCSDWEQIEKFADFINSAGYASPIRTPRGRDILAACGQLKSESERMRKTERLAFEAMMIANHGADD</sequence>
<feature type="chain" id="PRO_1000188593" description="Dual-specificity RNA methyltransferase RlmN">
    <location>
        <begin position="1"/>
        <end position="408"/>
    </location>
</feature>
<feature type="domain" description="Radical SAM core" evidence="2">
    <location>
        <begin position="126"/>
        <end position="375"/>
    </location>
</feature>
<feature type="active site" description="Proton acceptor" evidence="1">
    <location>
        <position position="120"/>
    </location>
</feature>
<feature type="active site" description="S-methylcysteine intermediate" evidence="1">
    <location>
        <position position="378"/>
    </location>
</feature>
<feature type="binding site" evidence="1">
    <location>
        <position position="140"/>
    </location>
    <ligand>
        <name>[4Fe-4S] cluster</name>
        <dbReference type="ChEBI" id="CHEBI:49883"/>
        <note>4Fe-4S-S-AdoMet</note>
    </ligand>
</feature>
<feature type="binding site" evidence="1">
    <location>
        <position position="144"/>
    </location>
    <ligand>
        <name>[4Fe-4S] cluster</name>
        <dbReference type="ChEBI" id="CHEBI:49883"/>
        <note>4Fe-4S-S-AdoMet</note>
    </ligand>
</feature>
<feature type="binding site" evidence="1">
    <location>
        <position position="147"/>
    </location>
    <ligand>
        <name>[4Fe-4S] cluster</name>
        <dbReference type="ChEBI" id="CHEBI:49883"/>
        <note>4Fe-4S-S-AdoMet</note>
    </ligand>
</feature>
<feature type="binding site" evidence="1">
    <location>
        <begin position="204"/>
        <end position="205"/>
    </location>
    <ligand>
        <name>S-adenosyl-L-methionine</name>
        <dbReference type="ChEBI" id="CHEBI:59789"/>
    </ligand>
</feature>
<feature type="binding site" evidence="1">
    <location>
        <position position="236"/>
    </location>
    <ligand>
        <name>S-adenosyl-L-methionine</name>
        <dbReference type="ChEBI" id="CHEBI:59789"/>
    </ligand>
</feature>
<feature type="binding site" evidence="1">
    <location>
        <begin position="258"/>
        <end position="260"/>
    </location>
    <ligand>
        <name>S-adenosyl-L-methionine</name>
        <dbReference type="ChEBI" id="CHEBI:59789"/>
    </ligand>
</feature>
<feature type="binding site" evidence="1">
    <location>
        <position position="335"/>
    </location>
    <ligand>
        <name>S-adenosyl-L-methionine</name>
        <dbReference type="ChEBI" id="CHEBI:59789"/>
    </ligand>
</feature>
<feature type="disulfide bond" description="(transient)" evidence="1">
    <location>
        <begin position="133"/>
        <end position="378"/>
    </location>
</feature>
<comment type="function">
    <text evidence="1">Specifically methylates position 2 of adenine 2503 in 23S rRNA and position 2 of adenine 37 in tRNAs. m2A2503 modification seems to play a crucial role in the proofreading step occurring at the peptidyl transferase center and thus would serve to optimize ribosomal fidelity.</text>
</comment>
<comment type="catalytic activity">
    <reaction evidence="1">
        <text>adenosine(2503) in 23S rRNA + 2 reduced [2Fe-2S]-[ferredoxin] + 2 S-adenosyl-L-methionine = 2-methyladenosine(2503) in 23S rRNA + 5'-deoxyadenosine + L-methionine + 2 oxidized [2Fe-2S]-[ferredoxin] + S-adenosyl-L-homocysteine</text>
        <dbReference type="Rhea" id="RHEA:42916"/>
        <dbReference type="Rhea" id="RHEA-COMP:10000"/>
        <dbReference type="Rhea" id="RHEA-COMP:10001"/>
        <dbReference type="Rhea" id="RHEA-COMP:10152"/>
        <dbReference type="Rhea" id="RHEA-COMP:10282"/>
        <dbReference type="ChEBI" id="CHEBI:17319"/>
        <dbReference type="ChEBI" id="CHEBI:33737"/>
        <dbReference type="ChEBI" id="CHEBI:33738"/>
        <dbReference type="ChEBI" id="CHEBI:57844"/>
        <dbReference type="ChEBI" id="CHEBI:57856"/>
        <dbReference type="ChEBI" id="CHEBI:59789"/>
        <dbReference type="ChEBI" id="CHEBI:74411"/>
        <dbReference type="ChEBI" id="CHEBI:74497"/>
        <dbReference type="EC" id="2.1.1.192"/>
    </reaction>
</comment>
<comment type="catalytic activity">
    <reaction evidence="1">
        <text>adenosine(37) in tRNA + 2 reduced [2Fe-2S]-[ferredoxin] + 2 S-adenosyl-L-methionine = 2-methyladenosine(37) in tRNA + 5'-deoxyadenosine + L-methionine + 2 oxidized [2Fe-2S]-[ferredoxin] + S-adenosyl-L-homocysteine</text>
        <dbReference type="Rhea" id="RHEA:43332"/>
        <dbReference type="Rhea" id="RHEA-COMP:10000"/>
        <dbReference type="Rhea" id="RHEA-COMP:10001"/>
        <dbReference type="Rhea" id="RHEA-COMP:10162"/>
        <dbReference type="Rhea" id="RHEA-COMP:10485"/>
        <dbReference type="ChEBI" id="CHEBI:17319"/>
        <dbReference type="ChEBI" id="CHEBI:33737"/>
        <dbReference type="ChEBI" id="CHEBI:33738"/>
        <dbReference type="ChEBI" id="CHEBI:57844"/>
        <dbReference type="ChEBI" id="CHEBI:57856"/>
        <dbReference type="ChEBI" id="CHEBI:59789"/>
        <dbReference type="ChEBI" id="CHEBI:74411"/>
        <dbReference type="ChEBI" id="CHEBI:74497"/>
        <dbReference type="EC" id="2.1.1.192"/>
    </reaction>
</comment>
<comment type="cofactor">
    <cofactor evidence="1">
        <name>[4Fe-4S] cluster</name>
        <dbReference type="ChEBI" id="CHEBI:49883"/>
    </cofactor>
    <text evidence="1">Binds 1 [4Fe-4S] cluster. The cluster is coordinated with 3 cysteines and an exchangeable S-adenosyl-L-methionine.</text>
</comment>
<comment type="subcellular location">
    <subcellularLocation>
        <location evidence="1">Cytoplasm</location>
    </subcellularLocation>
</comment>
<comment type="miscellaneous">
    <text evidence="1">Reaction proceeds by a ping-pong mechanism involving intermediate methylation of a conserved cysteine residue.</text>
</comment>
<comment type="similarity">
    <text evidence="1">Belongs to the radical SAM superfamily. RlmN family.</text>
</comment>
<reference key="1">
    <citation type="journal article" date="2010" name="Stand. Genomic Sci.">
        <title>Complete genome sequence of Rhizobium leguminosarum bv trifolii strain WSM2304, an effective microsymbiont of the South American clover Trifolium polymorphum.</title>
        <authorList>
            <person name="Reeve W."/>
            <person name="O'Hara G."/>
            <person name="Chain P."/>
            <person name="Ardley J."/>
            <person name="Brau L."/>
            <person name="Nandesena K."/>
            <person name="Tiwari R."/>
            <person name="Malfatti S."/>
            <person name="Kiss H."/>
            <person name="Lapidus A."/>
            <person name="Copeland A."/>
            <person name="Nolan M."/>
            <person name="Land M."/>
            <person name="Ivanova N."/>
            <person name="Mavromatis K."/>
            <person name="Markowitz V."/>
            <person name="Kyrpides N."/>
            <person name="Melino V."/>
            <person name="Denton M."/>
            <person name="Yates R."/>
            <person name="Howieson J."/>
        </authorList>
    </citation>
    <scope>NUCLEOTIDE SEQUENCE [LARGE SCALE GENOMIC DNA]</scope>
    <source>
        <strain>WSM2304</strain>
    </source>
</reference>
<organism>
    <name type="scientific">Rhizobium leguminosarum bv. trifolii (strain WSM2304)</name>
    <dbReference type="NCBI Taxonomy" id="395492"/>
    <lineage>
        <taxon>Bacteria</taxon>
        <taxon>Pseudomonadati</taxon>
        <taxon>Pseudomonadota</taxon>
        <taxon>Alphaproteobacteria</taxon>
        <taxon>Hyphomicrobiales</taxon>
        <taxon>Rhizobiaceae</taxon>
        <taxon>Rhizobium/Agrobacterium group</taxon>
        <taxon>Rhizobium</taxon>
    </lineage>
</organism>
<name>RLMN_RHILW</name>
<protein>
    <recommendedName>
        <fullName evidence="1">Dual-specificity RNA methyltransferase RlmN</fullName>
        <ecNumber evidence="1">2.1.1.192</ecNumber>
    </recommendedName>
    <alternativeName>
        <fullName evidence="1">23S rRNA (adenine(2503)-C(2))-methyltransferase</fullName>
    </alternativeName>
    <alternativeName>
        <fullName evidence="1">23S rRNA m2A2503 methyltransferase</fullName>
    </alternativeName>
    <alternativeName>
        <fullName evidence="1">Ribosomal RNA large subunit methyltransferase N</fullName>
    </alternativeName>
    <alternativeName>
        <fullName evidence="1">tRNA (adenine(37)-C(2))-methyltransferase</fullName>
    </alternativeName>
    <alternativeName>
        <fullName evidence="1">tRNA m2A37 methyltransferase</fullName>
    </alternativeName>
</protein>
<gene>
    <name evidence="1" type="primary">rlmN</name>
    <name type="ordered locus">Rleg2_3724</name>
</gene>
<proteinExistence type="inferred from homology"/>
<accession>B5ZTF1</accession>
<keyword id="KW-0004">4Fe-4S</keyword>
<keyword id="KW-0963">Cytoplasm</keyword>
<keyword id="KW-1015">Disulfide bond</keyword>
<keyword id="KW-0408">Iron</keyword>
<keyword id="KW-0411">Iron-sulfur</keyword>
<keyword id="KW-0479">Metal-binding</keyword>
<keyword id="KW-0489">Methyltransferase</keyword>
<keyword id="KW-1185">Reference proteome</keyword>
<keyword id="KW-0698">rRNA processing</keyword>
<keyword id="KW-0949">S-adenosyl-L-methionine</keyword>
<keyword id="KW-0808">Transferase</keyword>
<keyword id="KW-0819">tRNA processing</keyword>
<dbReference type="EC" id="2.1.1.192" evidence="1"/>
<dbReference type="EMBL" id="CP001191">
    <property type="protein sequence ID" value="ACI56987.1"/>
    <property type="molecule type" value="Genomic_DNA"/>
</dbReference>
<dbReference type="RefSeq" id="WP_012559243.1">
    <property type="nucleotide sequence ID" value="NC_011369.1"/>
</dbReference>
<dbReference type="SMR" id="B5ZTF1"/>
<dbReference type="STRING" id="395492.Rleg2_3724"/>
<dbReference type="KEGG" id="rlt:Rleg2_3724"/>
<dbReference type="eggNOG" id="COG0820">
    <property type="taxonomic scope" value="Bacteria"/>
</dbReference>
<dbReference type="HOGENOM" id="CLU_029101_2_0_5"/>
<dbReference type="Proteomes" id="UP000008330">
    <property type="component" value="Chromosome"/>
</dbReference>
<dbReference type="GO" id="GO:0005737">
    <property type="term" value="C:cytoplasm"/>
    <property type="evidence" value="ECO:0007669"/>
    <property type="project" value="UniProtKB-SubCell"/>
</dbReference>
<dbReference type="GO" id="GO:0051539">
    <property type="term" value="F:4 iron, 4 sulfur cluster binding"/>
    <property type="evidence" value="ECO:0007669"/>
    <property type="project" value="UniProtKB-UniRule"/>
</dbReference>
<dbReference type="GO" id="GO:0046872">
    <property type="term" value="F:metal ion binding"/>
    <property type="evidence" value="ECO:0007669"/>
    <property type="project" value="UniProtKB-KW"/>
</dbReference>
<dbReference type="GO" id="GO:0070040">
    <property type="term" value="F:rRNA (adenine(2503)-C2-)-methyltransferase activity"/>
    <property type="evidence" value="ECO:0007669"/>
    <property type="project" value="UniProtKB-UniRule"/>
</dbReference>
<dbReference type="GO" id="GO:0019843">
    <property type="term" value="F:rRNA binding"/>
    <property type="evidence" value="ECO:0007669"/>
    <property type="project" value="UniProtKB-UniRule"/>
</dbReference>
<dbReference type="GO" id="GO:0002935">
    <property type="term" value="F:tRNA (adenine(37)-C2)-methyltransferase activity"/>
    <property type="evidence" value="ECO:0007669"/>
    <property type="project" value="UniProtKB-UniRule"/>
</dbReference>
<dbReference type="GO" id="GO:0000049">
    <property type="term" value="F:tRNA binding"/>
    <property type="evidence" value="ECO:0007669"/>
    <property type="project" value="UniProtKB-UniRule"/>
</dbReference>
<dbReference type="GO" id="GO:0070475">
    <property type="term" value="P:rRNA base methylation"/>
    <property type="evidence" value="ECO:0007669"/>
    <property type="project" value="UniProtKB-UniRule"/>
</dbReference>
<dbReference type="GO" id="GO:0030488">
    <property type="term" value="P:tRNA methylation"/>
    <property type="evidence" value="ECO:0007669"/>
    <property type="project" value="UniProtKB-UniRule"/>
</dbReference>
<dbReference type="CDD" id="cd01335">
    <property type="entry name" value="Radical_SAM"/>
    <property type="match status" value="1"/>
</dbReference>
<dbReference type="FunFam" id="3.20.20.70:FF:000008">
    <property type="entry name" value="Dual-specificity RNA methyltransferase RlmN"/>
    <property type="match status" value="1"/>
</dbReference>
<dbReference type="Gene3D" id="1.10.150.530">
    <property type="match status" value="1"/>
</dbReference>
<dbReference type="Gene3D" id="3.20.20.70">
    <property type="entry name" value="Aldolase class I"/>
    <property type="match status" value="1"/>
</dbReference>
<dbReference type="HAMAP" id="MF_01849">
    <property type="entry name" value="RNA_methyltr_RlmN"/>
    <property type="match status" value="1"/>
</dbReference>
<dbReference type="InterPro" id="IPR013785">
    <property type="entry name" value="Aldolase_TIM"/>
</dbReference>
<dbReference type="InterPro" id="IPR040072">
    <property type="entry name" value="Methyltransferase_A"/>
</dbReference>
<dbReference type="InterPro" id="IPR048641">
    <property type="entry name" value="RlmN_N"/>
</dbReference>
<dbReference type="InterPro" id="IPR027492">
    <property type="entry name" value="RNA_MTrfase_RlmN"/>
</dbReference>
<dbReference type="InterPro" id="IPR004383">
    <property type="entry name" value="rRNA_lsu_MTrfase_RlmN/Cfr"/>
</dbReference>
<dbReference type="InterPro" id="IPR007197">
    <property type="entry name" value="rSAM"/>
</dbReference>
<dbReference type="NCBIfam" id="TIGR00048">
    <property type="entry name" value="rRNA_mod_RlmN"/>
    <property type="match status" value="1"/>
</dbReference>
<dbReference type="PANTHER" id="PTHR30544">
    <property type="entry name" value="23S RRNA METHYLTRANSFERASE"/>
    <property type="match status" value="1"/>
</dbReference>
<dbReference type="PANTHER" id="PTHR30544:SF5">
    <property type="entry name" value="RADICAL SAM CORE DOMAIN-CONTAINING PROTEIN"/>
    <property type="match status" value="1"/>
</dbReference>
<dbReference type="Pfam" id="PF04055">
    <property type="entry name" value="Radical_SAM"/>
    <property type="match status" value="1"/>
</dbReference>
<dbReference type="Pfam" id="PF21016">
    <property type="entry name" value="RlmN_N"/>
    <property type="match status" value="1"/>
</dbReference>
<dbReference type="PIRSF" id="PIRSF006004">
    <property type="entry name" value="CHP00048"/>
    <property type="match status" value="1"/>
</dbReference>
<dbReference type="SFLD" id="SFLDF00275">
    <property type="entry name" value="adenosine_C2_methyltransferase"/>
    <property type="match status" value="1"/>
</dbReference>
<dbReference type="SFLD" id="SFLDG01062">
    <property type="entry name" value="methyltransferase_(Class_A)"/>
    <property type="match status" value="1"/>
</dbReference>
<dbReference type="SUPFAM" id="SSF102114">
    <property type="entry name" value="Radical SAM enzymes"/>
    <property type="match status" value="1"/>
</dbReference>
<dbReference type="PROSITE" id="PS51918">
    <property type="entry name" value="RADICAL_SAM"/>
    <property type="match status" value="1"/>
</dbReference>
<evidence type="ECO:0000255" key="1">
    <source>
        <dbReference type="HAMAP-Rule" id="MF_01849"/>
    </source>
</evidence>
<evidence type="ECO:0000255" key="2">
    <source>
        <dbReference type="PROSITE-ProRule" id="PRU01266"/>
    </source>
</evidence>